<sequence>MARTLEPLAKKIFKGVLVAELVGVFGAYFLFSKMHTSQDFRQTMSKKYPFILEVYYKSTEKSGMYGIRELDQKTWLNSKN</sequence>
<dbReference type="EMBL" id="AC007390">
    <property type="status" value="NOT_ANNOTATED_CDS"/>
    <property type="molecule type" value="Genomic_DNA"/>
</dbReference>
<dbReference type="EMBL" id="CH471053">
    <property type="protein sequence ID" value="EAX00404.1"/>
    <property type="molecule type" value="Genomic_DNA"/>
</dbReference>
<dbReference type="CCDS" id="CCDS82435.1"/>
<dbReference type="RefSeq" id="NP_001309302.1">
    <property type="nucleotide sequence ID" value="NM_001322373.2"/>
</dbReference>
<dbReference type="RefSeq" id="NP_001309303.1">
    <property type="nucleotide sequence ID" value="NM_001322374.2"/>
</dbReference>
<dbReference type="RefSeq" id="NP_001309304.1">
    <property type="nucleotide sequence ID" value="NM_001322375.2"/>
</dbReference>
<dbReference type="RefSeq" id="NP_001309305.1">
    <property type="nucleotide sequence ID" value="NM_001322376.2"/>
</dbReference>
<dbReference type="RefSeq" id="XP_016858595.1">
    <property type="nucleotide sequence ID" value="XM_017003106.2"/>
</dbReference>
<dbReference type="RefSeq" id="XP_016858596.1">
    <property type="nucleotide sequence ID" value="XM_017003107.2"/>
</dbReference>
<dbReference type="RefSeq" id="XP_016858597.1">
    <property type="nucleotide sequence ID" value="XM_017003108.3"/>
</dbReference>
<dbReference type="RefSeq" id="XP_016858598.1">
    <property type="nucleotide sequence ID" value="XM_017003109.1"/>
</dbReference>
<dbReference type="RefSeq" id="XP_054196048.1">
    <property type="nucleotide sequence ID" value="XM_054340073.1"/>
</dbReference>
<dbReference type="RefSeq" id="XP_054196049.1">
    <property type="nucleotide sequence ID" value="XM_054340074.1"/>
</dbReference>
<dbReference type="RefSeq" id="XP_054196050.1">
    <property type="nucleotide sequence ID" value="XM_054340075.1"/>
</dbReference>
<dbReference type="SMR" id="A8MTT3"/>
<dbReference type="FunCoup" id="A8MTT3">
    <property type="interactions" value="142"/>
</dbReference>
<dbReference type="IntAct" id="A8MTT3">
    <property type="interactions" value="3"/>
</dbReference>
<dbReference type="STRING" id="9606.ENSP00000384331"/>
<dbReference type="iPTMnet" id="A8MTT3"/>
<dbReference type="PhosphoSitePlus" id="A8MTT3"/>
<dbReference type="BioMuta" id="CEBPZOS"/>
<dbReference type="jPOST" id="A8MTT3"/>
<dbReference type="MassIVE" id="A8MTT3"/>
<dbReference type="PaxDb" id="9606-ENSP00000384331"/>
<dbReference type="PeptideAtlas" id="A8MTT3"/>
<dbReference type="ProteomicsDB" id="2049"/>
<dbReference type="Pumba" id="A8MTT3"/>
<dbReference type="Antibodypedia" id="66172">
    <property type="antibodies" value="3 antibodies from 3 providers"/>
</dbReference>
<dbReference type="DNASU" id="100505876"/>
<dbReference type="Ensembl" id="ENST00000392061.6">
    <property type="protein sequence ID" value="ENSP00000383895.1"/>
    <property type="gene ID" value="ENSG00000218739.10"/>
</dbReference>
<dbReference type="Ensembl" id="ENST00000397064.6">
    <property type="protein sequence ID" value="ENSP00000380254.2"/>
    <property type="gene ID" value="ENSG00000218739.10"/>
</dbReference>
<dbReference type="Ensembl" id="ENST00000397226.2">
    <property type="protein sequence ID" value="ENSP00000380403.2"/>
    <property type="gene ID" value="ENSG00000218739.10"/>
</dbReference>
<dbReference type="Ensembl" id="ENST00000402297.6">
    <property type="protein sequence ID" value="ENSP00000384331.1"/>
    <property type="gene ID" value="ENSG00000218739.10"/>
</dbReference>
<dbReference type="Ensembl" id="ENST00000406711.5">
    <property type="protein sequence ID" value="ENSP00000384813.1"/>
    <property type="gene ID" value="ENSG00000218739.10"/>
</dbReference>
<dbReference type="GeneID" id="100505876"/>
<dbReference type="KEGG" id="hsa:100505876"/>
<dbReference type="MANE-Select" id="ENST00000402297.6">
    <property type="protein sequence ID" value="ENSP00000384331.1"/>
    <property type="RefSeq nucleotide sequence ID" value="NM_001322374.2"/>
    <property type="RefSeq protein sequence ID" value="NP_001309303.1"/>
</dbReference>
<dbReference type="UCSC" id="uc002rpx.3">
    <property type="organism name" value="human"/>
</dbReference>
<dbReference type="AGR" id="HGNC:49288"/>
<dbReference type="CTD" id="100505876"/>
<dbReference type="DisGeNET" id="100505876"/>
<dbReference type="GeneCards" id="CEBPZOS"/>
<dbReference type="HGNC" id="HGNC:49288">
    <property type="gene designation" value="CEBPZOS"/>
</dbReference>
<dbReference type="HPA" id="ENSG00000218739">
    <property type="expression patterns" value="Low tissue specificity"/>
</dbReference>
<dbReference type="neXtProt" id="NX_A8MTT3"/>
<dbReference type="OpenTargets" id="ENSG00000218739"/>
<dbReference type="VEuPathDB" id="HostDB:ENSG00000218739"/>
<dbReference type="eggNOG" id="ENOG502ST5Z">
    <property type="taxonomic scope" value="Eukaryota"/>
</dbReference>
<dbReference type="GeneTree" id="ENSGT00500000045333"/>
<dbReference type="HOGENOM" id="CLU_185538_0_0_1"/>
<dbReference type="InParanoid" id="A8MTT3"/>
<dbReference type="OMA" id="HMMNNSR"/>
<dbReference type="OrthoDB" id="5804148at2759"/>
<dbReference type="PAN-GO" id="A8MTT3">
    <property type="GO annotations" value="0 GO annotations based on evolutionary models"/>
</dbReference>
<dbReference type="PhylomeDB" id="A8MTT3"/>
<dbReference type="TreeFam" id="TF353548"/>
<dbReference type="PathwayCommons" id="A8MTT3"/>
<dbReference type="SignaLink" id="A8MTT3"/>
<dbReference type="BioGRID-ORCS" id="100505876">
    <property type="hits" value="1 hit in 39 CRISPR screens"/>
</dbReference>
<dbReference type="ChiTaRS" id="CEBPZOS">
    <property type="organism name" value="human"/>
</dbReference>
<dbReference type="GenomeRNAi" id="100505876"/>
<dbReference type="Pharos" id="A8MTT3">
    <property type="development level" value="Tdark"/>
</dbReference>
<dbReference type="PRO" id="PR:A8MTT3"/>
<dbReference type="Proteomes" id="UP000005640">
    <property type="component" value="Chromosome 2"/>
</dbReference>
<dbReference type="RNAct" id="A8MTT3">
    <property type="molecule type" value="protein"/>
</dbReference>
<dbReference type="Bgee" id="ENSG00000218739">
    <property type="expression patterns" value="Expressed in hindlimb stylopod muscle and 169 other cell types or tissues"/>
</dbReference>
<dbReference type="GO" id="GO:0031966">
    <property type="term" value="C:mitochondrial membrane"/>
    <property type="evidence" value="ECO:0007669"/>
    <property type="project" value="UniProtKB-SubCell"/>
</dbReference>
<dbReference type="GO" id="GO:0005739">
    <property type="term" value="C:mitochondrion"/>
    <property type="evidence" value="ECO:0006056"/>
    <property type="project" value="FlyBase"/>
</dbReference>
<dbReference type="InterPro" id="IPR037764">
    <property type="entry name" value="CEBPZOS"/>
</dbReference>
<dbReference type="PANTHER" id="PTHR38001">
    <property type="entry name" value="PROTEIN CEBPZOS"/>
    <property type="match status" value="1"/>
</dbReference>
<dbReference type="PANTHER" id="PTHR38001:SF1">
    <property type="entry name" value="PROTEIN CEBPZOS"/>
    <property type="match status" value="1"/>
</dbReference>
<organism>
    <name type="scientific">Homo sapiens</name>
    <name type="common">Human</name>
    <dbReference type="NCBI Taxonomy" id="9606"/>
    <lineage>
        <taxon>Eukaryota</taxon>
        <taxon>Metazoa</taxon>
        <taxon>Chordata</taxon>
        <taxon>Craniata</taxon>
        <taxon>Vertebrata</taxon>
        <taxon>Euteleostomi</taxon>
        <taxon>Mammalia</taxon>
        <taxon>Eutheria</taxon>
        <taxon>Euarchontoglires</taxon>
        <taxon>Primates</taxon>
        <taxon>Haplorrhini</taxon>
        <taxon>Catarrhini</taxon>
        <taxon>Hominidae</taxon>
        <taxon>Homo</taxon>
    </lineage>
</organism>
<feature type="chain" id="PRO_0000432372" description="Protein CEBPZOS">
    <location>
        <begin position="1"/>
        <end position="80"/>
    </location>
</feature>
<feature type="transmembrane region" description="Helical" evidence="1">
    <location>
        <begin position="15"/>
        <end position="32"/>
    </location>
</feature>
<keyword id="KW-0472">Membrane</keyword>
<keyword id="KW-0496">Mitochondrion</keyword>
<keyword id="KW-1267">Proteomics identification</keyword>
<keyword id="KW-1185">Reference proteome</keyword>
<keyword id="KW-0812">Transmembrane</keyword>
<keyword id="KW-1133">Transmembrane helix</keyword>
<name>CEBOS_HUMAN</name>
<evidence type="ECO:0000255" key="1"/>
<evidence type="ECO:0000269" key="2">
    <source>
    </source>
</evidence>
<evidence type="ECO:0000305" key="3"/>
<evidence type="ECO:0000312" key="4">
    <source>
        <dbReference type="HGNC" id="HGNC:49288"/>
    </source>
</evidence>
<proteinExistence type="evidence at protein level"/>
<accession>A8MTT3</accession>
<accession>A8MUR5</accession>
<reference key="1">
    <citation type="journal article" date="2005" name="Nature">
        <title>Generation and annotation of the DNA sequences of human chromosomes 2 and 4.</title>
        <authorList>
            <person name="Hillier L.W."/>
            <person name="Graves T.A."/>
            <person name="Fulton R.S."/>
            <person name="Fulton L.A."/>
            <person name="Pepin K.H."/>
            <person name="Minx P."/>
            <person name="Wagner-McPherson C."/>
            <person name="Layman D."/>
            <person name="Wylie K."/>
            <person name="Sekhon M."/>
            <person name="Becker M.C."/>
            <person name="Fewell G.A."/>
            <person name="Delehaunty K.D."/>
            <person name="Miner T.L."/>
            <person name="Nash W.E."/>
            <person name="Kremitzki C."/>
            <person name="Oddy L."/>
            <person name="Du H."/>
            <person name="Sun H."/>
            <person name="Bradshaw-Cordum H."/>
            <person name="Ali J."/>
            <person name="Carter J."/>
            <person name="Cordes M."/>
            <person name="Harris A."/>
            <person name="Isak A."/>
            <person name="van Brunt A."/>
            <person name="Nguyen C."/>
            <person name="Du F."/>
            <person name="Courtney L."/>
            <person name="Kalicki J."/>
            <person name="Ozersky P."/>
            <person name="Abbott S."/>
            <person name="Armstrong J."/>
            <person name="Belter E.A."/>
            <person name="Caruso L."/>
            <person name="Cedroni M."/>
            <person name="Cotton M."/>
            <person name="Davidson T."/>
            <person name="Desai A."/>
            <person name="Elliott G."/>
            <person name="Erb T."/>
            <person name="Fronick C."/>
            <person name="Gaige T."/>
            <person name="Haakenson W."/>
            <person name="Haglund K."/>
            <person name="Holmes A."/>
            <person name="Harkins R."/>
            <person name="Kim K."/>
            <person name="Kruchowski S.S."/>
            <person name="Strong C.M."/>
            <person name="Grewal N."/>
            <person name="Goyea E."/>
            <person name="Hou S."/>
            <person name="Levy A."/>
            <person name="Martinka S."/>
            <person name="Mead K."/>
            <person name="McLellan M.D."/>
            <person name="Meyer R."/>
            <person name="Randall-Maher J."/>
            <person name="Tomlinson C."/>
            <person name="Dauphin-Kohlberg S."/>
            <person name="Kozlowicz-Reilly A."/>
            <person name="Shah N."/>
            <person name="Swearengen-Shahid S."/>
            <person name="Snider J."/>
            <person name="Strong J.T."/>
            <person name="Thompson J."/>
            <person name="Yoakum M."/>
            <person name="Leonard S."/>
            <person name="Pearman C."/>
            <person name="Trani L."/>
            <person name="Radionenko M."/>
            <person name="Waligorski J.E."/>
            <person name="Wang C."/>
            <person name="Rock S.M."/>
            <person name="Tin-Wollam A.-M."/>
            <person name="Maupin R."/>
            <person name="Latreille P."/>
            <person name="Wendl M.C."/>
            <person name="Yang S.-P."/>
            <person name="Pohl C."/>
            <person name="Wallis J.W."/>
            <person name="Spieth J."/>
            <person name="Bieri T.A."/>
            <person name="Berkowicz N."/>
            <person name="Nelson J.O."/>
            <person name="Osborne J."/>
            <person name="Ding L."/>
            <person name="Meyer R."/>
            <person name="Sabo A."/>
            <person name="Shotland Y."/>
            <person name="Sinha P."/>
            <person name="Wohldmann P.E."/>
            <person name="Cook L.L."/>
            <person name="Hickenbotham M.T."/>
            <person name="Eldred J."/>
            <person name="Williams D."/>
            <person name="Jones T.A."/>
            <person name="She X."/>
            <person name="Ciccarelli F.D."/>
            <person name="Izaurralde E."/>
            <person name="Taylor J."/>
            <person name="Schmutz J."/>
            <person name="Myers R.M."/>
            <person name="Cox D.R."/>
            <person name="Huang X."/>
            <person name="McPherson J.D."/>
            <person name="Mardis E.R."/>
            <person name="Clifton S.W."/>
            <person name="Warren W.C."/>
            <person name="Chinwalla A.T."/>
            <person name="Eddy S.R."/>
            <person name="Marra M.A."/>
            <person name="Ovcharenko I."/>
            <person name="Furey T.S."/>
            <person name="Miller W."/>
            <person name="Eichler E.E."/>
            <person name="Bork P."/>
            <person name="Suyama M."/>
            <person name="Torrents D."/>
            <person name="Waterston R.H."/>
            <person name="Wilson R.K."/>
        </authorList>
    </citation>
    <scope>NUCLEOTIDE SEQUENCE [LARGE SCALE GENOMIC DNA]</scope>
</reference>
<reference key="2">
    <citation type="submission" date="2005-09" db="EMBL/GenBank/DDBJ databases">
        <authorList>
            <person name="Mural R.J."/>
            <person name="Istrail S."/>
            <person name="Sutton G.G."/>
            <person name="Florea L."/>
            <person name="Halpern A.L."/>
            <person name="Mobarry C.M."/>
            <person name="Lippert R."/>
            <person name="Walenz B."/>
            <person name="Shatkay H."/>
            <person name="Dew I."/>
            <person name="Miller J.R."/>
            <person name="Flanigan M.J."/>
            <person name="Edwards N.J."/>
            <person name="Bolanos R."/>
            <person name="Fasulo D."/>
            <person name="Halldorsson B.V."/>
            <person name="Hannenhalli S."/>
            <person name="Turner R."/>
            <person name="Yooseph S."/>
            <person name="Lu F."/>
            <person name="Nusskern D.R."/>
            <person name="Shue B.C."/>
            <person name="Zheng X.H."/>
            <person name="Zhong F."/>
            <person name="Delcher A.L."/>
            <person name="Huson D.H."/>
            <person name="Kravitz S.A."/>
            <person name="Mouchard L."/>
            <person name="Reinert K."/>
            <person name="Remington K.A."/>
            <person name="Clark A.G."/>
            <person name="Waterman M.S."/>
            <person name="Eichler E.E."/>
            <person name="Adams M.D."/>
            <person name="Hunkapiller M.W."/>
            <person name="Myers E.W."/>
            <person name="Venter J.C."/>
        </authorList>
    </citation>
    <scope>NUCLEOTIDE SEQUENCE [LARGE SCALE GENOMIC DNA]</scope>
</reference>
<reference key="3">
    <citation type="journal article" date="2014" name="Mol. Cell">
        <title>Proteomic mapping of the human mitochondrial intermembrane space in live cells via ratiometric APEX tagging.</title>
        <authorList>
            <person name="Hung V."/>
            <person name="Zou P."/>
            <person name="Rhee H.W."/>
            <person name="Udeshi N.D."/>
            <person name="Cracan V."/>
            <person name="Svinkina T."/>
            <person name="Carr S.A."/>
            <person name="Mootha V.K."/>
            <person name="Ting A.Y."/>
        </authorList>
    </citation>
    <scope>IDENTIFICATION BY MASS SPECTROMETRY</scope>
    <scope>SUBCELLULAR LOCATION</scope>
</reference>
<comment type="subcellular location">
    <subcellularLocation>
        <location evidence="2">Mitochondrion membrane</location>
        <topology evidence="1">Single-pass membrane protein</topology>
    </subcellularLocation>
</comment>
<protein>
    <recommendedName>
        <fullName evidence="3">Protein CEBPZOS</fullName>
    </recommendedName>
    <alternativeName>
        <fullName evidence="4">CEBPZ antisense RNA 1</fullName>
    </alternativeName>
    <alternativeName>
        <fullName evidence="4">CEBPZ opposite strand</fullName>
    </alternativeName>
</protein>
<gene>
    <name evidence="4" type="primary">CEBPZOS</name>
    <name type="synonym">CEBPZ-AS1</name>
</gene>